<gene>
    <name evidence="1" type="primary">gatC</name>
    <name type="ordered locus">RoseRS_1143</name>
</gene>
<organism>
    <name type="scientific">Roseiflexus sp. (strain RS-1)</name>
    <dbReference type="NCBI Taxonomy" id="357808"/>
    <lineage>
        <taxon>Bacteria</taxon>
        <taxon>Bacillati</taxon>
        <taxon>Chloroflexota</taxon>
        <taxon>Chloroflexia</taxon>
        <taxon>Chloroflexales</taxon>
        <taxon>Roseiflexineae</taxon>
        <taxon>Roseiflexaceae</taxon>
        <taxon>Roseiflexus</taxon>
    </lineage>
</organism>
<evidence type="ECO:0000255" key="1">
    <source>
        <dbReference type="HAMAP-Rule" id="MF_00122"/>
    </source>
</evidence>
<name>GATC_ROSS1</name>
<protein>
    <recommendedName>
        <fullName evidence="1">Aspartyl/glutamyl-tRNA(Asn/Gln) amidotransferase subunit C</fullName>
        <shortName evidence="1">Asp/Glu-ADT subunit C</shortName>
        <ecNumber evidence="1">6.3.5.-</ecNumber>
    </recommendedName>
</protein>
<feature type="chain" id="PRO_1000071389" description="Aspartyl/glutamyl-tRNA(Asn/Gln) amidotransferase subunit C">
    <location>
        <begin position="1"/>
        <end position="97"/>
    </location>
</feature>
<comment type="function">
    <text evidence="1">Allows the formation of correctly charged Asn-tRNA(Asn) or Gln-tRNA(Gln) through the transamidation of misacylated Asp-tRNA(Asn) or Glu-tRNA(Gln) in organisms which lack either or both of asparaginyl-tRNA or glutaminyl-tRNA synthetases. The reaction takes place in the presence of glutamine and ATP through an activated phospho-Asp-tRNA(Asn) or phospho-Glu-tRNA(Gln).</text>
</comment>
<comment type="catalytic activity">
    <reaction evidence="1">
        <text>L-glutamyl-tRNA(Gln) + L-glutamine + ATP + H2O = L-glutaminyl-tRNA(Gln) + L-glutamate + ADP + phosphate + H(+)</text>
        <dbReference type="Rhea" id="RHEA:17521"/>
        <dbReference type="Rhea" id="RHEA-COMP:9681"/>
        <dbReference type="Rhea" id="RHEA-COMP:9684"/>
        <dbReference type="ChEBI" id="CHEBI:15377"/>
        <dbReference type="ChEBI" id="CHEBI:15378"/>
        <dbReference type="ChEBI" id="CHEBI:29985"/>
        <dbReference type="ChEBI" id="CHEBI:30616"/>
        <dbReference type="ChEBI" id="CHEBI:43474"/>
        <dbReference type="ChEBI" id="CHEBI:58359"/>
        <dbReference type="ChEBI" id="CHEBI:78520"/>
        <dbReference type="ChEBI" id="CHEBI:78521"/>
        <dbReference type="ChEBI" id="CHEBI:456216"/>
    </reaction>
</comment>
<comment type="catalytic activity">
    <reaction evidence="1">
        <text>L-aspartyl-tRNA(Asn) + L-glutamine + ATP + H2O = L-asparaginyl-tRNA(Asn) + L-glutamate + ADP + phosphate + 2 H(+)</text>
        <dbReference type="Rhea" id="RHEA:14513"/>
        <dbReference type="Rhea" id="RHEA-COMP:9674"/>
        <dbReference type="Rhea" id="RHEA-COMP:9677"/>
        <dbReference type="ChEBI" id="CHEBI:15377"/>
        <dbReference type="ChEBI" id="CHEBI:15378"/>
        <dbReference type="ChEBI" id="CHEBI:29985"/>
        <dbReference type="ChEBI" id="CHEBI:30616"/>
        <dbReference type="ChEBI" id="CHEBI:43474"/>
        <dbReference type="ChEBI" id="CHEBI:58359"/>
        <dbReference type="ChEBI" id="CHEBI:78515"/>
        <dbReference type="ChEBI" id="CHEBI:78516"/>
        <dbReference type="ChEBI" id="CHEBI:456216"/>
    </reaction>
</comment>
<comment type="subunit">
    <text evidence="1">Heterotrimer of A, B and C subunits.</text>
</comment>
<comment type="similarity">
    <text evidence="1">Belongs to the GatC family.</text>
</comment>
<proteinExistence type="inferred from homology"/>
<accession>A5USE7</accession>
<keyword id="KW-0067">ATP-binding</keyword>
<keyword id="KW-0436">Ligase</keyword>
<keyword id="KW-0547">Nucleotide-binding</keyword>
<keyword id="KW-0648">Protein biosynthesis</keyword>
<sequence>MALTLQDVEHVARLARLRLSPAELEKMRDQLSNILDHFQMLQQIDVSAVPPTAQVTDLVNVLREDEIRPSLPHEQALANAPEQQDGMFRVRAIFEEE</sequence>
<reference key="1">
    <citation type="submission" date="2007-04" db="EMBL/GenBank/DDBJ databases">
        <title>Complete sequence of Roseiflexus sp. RS-1.</title>
        <authorList>
            <consortium name="US DOE Joint Genome Institute"/>
            <person name="Copeland A."/>
            <person name="Lucas S."/>
            <person name="Lapidus A."/>
            <person name="Barry K."/>
            <person name="Detter J.C."/>
            <person name="Glavina del Rio T."/>
            <person name="Hammon N."/>
            <person name="Israni S."/>
            <person name="Dalin E."/>
            <person name="Tice H."/>
            <person name="Pitluck S."/>
            <person name="Chertkov O."/>
            <person name="Brettin T."/>
            <person name="Bruce D."/>
            <person name="Han C."/>
            <person name="Schmutz J."/>
            <person name="Larimer F."/>
            <person name="Land M."/>
            <person name="Hauser L."/>
            <person name="Kyrpides N."/>
            <person name="Mikhailova N."/>
            <person name="Bryant D.A."/>
            <person name="Richardson P."/>
        </authorList>
    </citation>
    <scope>NUCLEOTIDE SEQUENCE [LARGE SCALE GENOMIC DNA]</scope>
    <source>
        <strain>RS-1</strain>
    </source>
</reference>
<dbReference type="EC" id="6.3.5.-" evidence="1"/>
<dbReference type="EMBL" id="CP000686">
    <property type="protein sequence ID" value="ABQ89550.1"/>
    <property type="molecule type" value="Genomic_DNA"/>
</dbReference>
<dbReference type="RefSeq" id="WP_011955903.1">
    <property type="nucleotide sequence ID" value="NC_009523.1"/>
</dbReference>
<dbReference type="SMR" id="A5USE7"/>
<dbReference type="STRING" id="357808.RoseRS_1143"/>
<dbReference type="KEGG" id="rrs:RoseRS_1143"/>
<dbReference type="eggNOG" id="COG0721">
    <property type="taxonomic scope" value="Bacteria"/>
</dbReference>
<dbReference type="HOGENOM" id="CLU_105899_1_0_0"/>
<dbReference type="OrthoDB" id="9813938at2"/>
<dbReference type="Proteomes" id="UP000006554">
    <property type="component" value="Chromosome"/>
</dbReference>
<dbReference type="GO" id="GO:0050566">
    <property type="term" value="F:asparaginyl-tRNA synthase (glutamine-hydrolyzing) activity"/>
    <property type="evidence" value="ECO:0007669"/>
    <property type="project" value="RHEA"/>
</dbReference>
<dbReference type="GO" id="GO:0005524">
    <property type="term" value="F:ATP binding"/>
    <property type="evidence" value="ECO:0007669"/>
    <property type="project" value="UniProtKB-KW"/>
</dbReference>
<dbReference type="GO" id="GO:0050567">
    <property type="term" value="F:glutaminyl-tRNA synthase (glutamine-hydrolyzing) activity"/>
    <property type="evidence" value="ECO:0007669"/>
    <property type="project" value="UniProtKB-UniRule"/>
</dbReference>
<dbReference type="GO" id="GO:0070681">
    <property type="term" value="P:glutaminyl-tRNAGln biosynthesis via transamidation"/>
    <property type="evidence" value="ECO:0007669"/>
    <property type="project" value="TreeGrafter"/>
</dbReference>
<dbReference type="GO" id="GO:0006450">
    <property type="term" value="P:regulation of translational fidelity"/>
    <property type="evidence" value="ECO:0007669"/>
    <property type="project" value="InterPro"/>
</dbReference>
<dbReference type="GO" id="GO:0006412">
    <property type="term" value="P:translation"/>
    <property type="evidence" value="ECO:0007669"/>
    <property type="project" value="UniProtKB-UniRule"/>
</dbReference>
<dbReference type="Gene3D" id="1.10.20.60">
    <property type="entry name" value="Glu-tRNAGln amidotransferase C subunit, N-terminal domain"/>
    <property type="match status" value="1"/>
</dbReference>
<dbReference type="HAMAP" id="MF_00122">
    <property type="entry name" value="GatC"/>
    <property type="match status" value="1"/>
</dbReference>
<dbReference type="InterPro" id="IPR036113">
    <property type="entry name" value="Asp/Glu-ADT_sf_sub_c"/>
</dbReference>
<dbReference type="InterPro" id="IPR003837">
    <property type="entry name" value="GatC"/>
</dbReference>
<dbReference type="NCBIfam" id="TIGR00135">
    <property type="entry name" value="gatC"/>
    <property type="match status" value="1"/>
</dbReference>
<dbReference type="PANTHER" id="PTHR15004">
    <property type="entry name" value="GLUTAMYL-TRNA(GLN) AMIDOTRANSFERASE SUBUNIT C, MITOCHONDRIAL"/>
    <property type="match status" value="1"/>
</dbReference>
<dbReference type="PANTHER" id="PTHR15004:SF0">
    <property type="entry name" value="GLUTAMYL-TRNA(GLN) AMIDOTRANSFERASE SUBUNIT C, MITOCHONDRIAL"/>
    <property type="match status" value="1"/>
</dbReference>
<dbReference type="Pfam" id="PF02686">
    <property type="entry name" value="GatC"/>
    <property type="match status" value="1"/>
</dbReference>
<dbReference type="SUPFAM" id="SSF141000">
    <property type="entry name" value="Glu-tRNAGln amidotransferase C subunit"/>
    <property type="match status" value="1"/>
</dbReference>